<gene>
    <name evidence="2" type="primary">eccC3</name>
    <name type="ordered locus">MT0297</name>
</gene>
<evidence type="ECO:0000250" key="1">
    <source>
        <dbReference type="UniProtKB" id="B2HST4"/>
    </source>
</evidence>
<evidence type="ECO:0000250" key="2">
    <source>
        <dbReference type="UniProtKB" id="P9WNA9"/>
    </source>
</evidence>
<evidence type="ECO:0000255" key="3"/>
<evidence type="ECO:0000255" key="4">
    <source>
        <dbReference type="PROSITE-ProRule" id="PRU00289"/>
    </source>
</evidence>
<reference key="1">
    <citation type="journal article" date="2002" name="J. Bacteriol.">
        <title>Whole-genome comparison of Mycobacterium tuberculosis clinical and laboratory strains.</title>
        <authorList>
            <person name="Fleischmann R.D."/>
            <person name="Alland D."/>
            <person name="Eisen J.A."/>
            <person name="Carpenter L."/>
            <person name="White O."/>
            <person name="Peterson J.D."/>
            <person name="DeBoy R.T."/>
            <person name="Dodson R.J."/>
            <person name="Gwinn M.L."/>
            <person name="Haft D.H."/>
            <person name="Hickey E.K."/>
            <person name="Kolonay J.F."/>
            <person name="Nelson W.C."/>
            <person name="Umayam L.A."/>
            <person name="Ermolaeva M.D."/>
            <person name="Salzberg S.L."/>
            <person name="Delcher A."/>
            <person name="Utterback T.R."/>
            <person name="Weidman J.F."/>
            <person name="Khouri H.M."/>
            <person name="Gill J."/>
            <person name="Mikula A."/>
            <person name="Bishai W."/>
            <person name="Jacobs W.R. Jr."/>
            <person name="Venter J.C."/>
            <person name="Fraser C.M."/>
        </authorList>
    </citation>
    <scope>NUCLEOTIDE SEQUENCE [LARGE SCALE GENOMIC DNA]</scope>
    <source>
        <strain>CDC 1551 / Oshkosh</strain>
    </source>
</reference>
<name>ECCC3_MYCTO</name>
<organism>
    <name type="scientific">Mycobacterium tuberculosis (strain CDC 1551 / Oshkosh)</name>
    <dbReference type="NCBI Taxonomy" id="83331"/>
    <lineage>
        <taxon>Bacteria</taxon>
        <taxon>Bacillati</taxon>
        <taxon>Actinomycetota</taxon>
        <taxon>Actinomycetes</taxon>
        <taxon>Mycobacteriales</taxon>
        <taxon>Mycobacteriaceae</taxon>
        <taxon>Mycobacterium</taxon>
        <taxon>Mycobacterium tuberculosis complex</taxon>
    </lineage>
</organism>
<proteinExistence type="inferred from homology"/>
<dbReference type="EMBL" id="AE000516">
    <property type="protein sequence ID" value="AAK44521.1"/>
    <property type="molecule type" value="Genomic_DNA"/>
</dbReference>
<dbReference type="PIR" id="B70836">
    <property type="entry name" value="B70836"/>
</dbReference>
<dbReference type="RefSeq" id="WP_003401478.1">
    <property type="nucleotide sequence ID" value="NZ_KK341227.1"/>
</dbReference>
<dbReference type="SMR" id="P9WNA8"/>
<dbReference type="KEGG" id="mtc:MT0297"/>
<dbReference type="PATRIC" id="fig|83331.31.peg.320"/>
<dbReference type="HOGENOM" id="CLU_003134_1_0_11"/>
<dbReference type="Proteomes" id="UP000001020">
    <property type="component" value="Chromosome"/>
</dbReference>
<dbReference type="GO" id="GO:0005886">
    <property type="term" value="C:plasma membrane"/>
    <property type="evidence" value="ECO:0007669"/>
    <property type="project" value="UniProtKB-SubCell"/>
</dbReference>
<dbReference type="GO" id="GO:0005524">
    <property type="term" value="F:ATP binding"/>
    <property type="evidence" value="ECO:0007669"/>
    <property type="project" value="UniProtKB-KW"/>
</dbReference>
<dbReference type="GO" id="GO:0016887">
    <property type="term" value="F:ATP hydrolysis activity"/>
    <property type="evidence" value="ECO:0007669"/>
    <property type="project" value="InterPro"/>
</dbReference>
<dbReference type="GO" id="GO:0003677">
    <property type="term" value="F:DNA binding"/>
    <property type="evidence" value="ECO:0007669"/>
    <property type="project" value="InterPro"/>
</dbReference>
<dbReference type="FunFam" id="3.40.50.300:FF:002817">
    <property type="entry name" value="ESX-3 secretion system protein EccC3"/>
    <property type="match status" value="1"/>
</dbReference>
<dbReference type="Gene3D" id="3.40.50.300">
    <property type="entry name" value="P-loop containing nucleotide triphosphate hydrolases"/>
    <property type="match status" value="3"/>
</dbReference>
<dbReference type="InterPro" id="IPR003593">
    <property type="entry name" value="AAA+_ATPase"/>
</dbReference>
<dbReference type="InterPro" id="IPR023836">
    <property type="entry name" value="EccCa-like_Actinobacteria"/>
</dbReference>
<dbReference type="InterPro" id="IPR023837">
    <property type="entry name" value="EccCb-like_Actinobacteria"/>
</dbReference>
<dbReference type="InterPro" id="IPR050206">
    <property type="entry name" value="FtsK/SpoIIIE/SftA"/>
</dbReference>
<dbReference type="InterPro" id="IPR002543">
    <property type="entry name" value="FtsK_dom"/>
</dbReference>
<dbReference type="InterPro" id="IPR027417">
    <property type="entry name" value="P-loop_NTPase"/>
</dbReference>
<dbReference type="NCBIfam" id="TIGR03924">
    <property type="entry name" value="T7SS_EccC_a"/>
    <property type="match status" value="1"/>
</dbReference>
<dbReference type="NCBIfam" id="TIGR03925">
    <property type="entry name" value="T7SS_EccC_b"/>
    <property type="match status" value="1"/>
</dbReference>
<dbReference type="PANTHER" id="PTHR22683">
    <property type="entry name" value="SPORULATION PROTEIN RELATED"/>
    <property type="match status" value="1"/>
</dbReference>
<dbReference type="PANTHER" id="PTHR22683:SF1">
    <property type="entry name" value="TYPE VII SECRETION SYSTEM PROTEIN ESSC"/>
    <property type="match status" value="1"/>
</dbReference>
<dbReference type="Pfam" id="PF01580">
    <property type="entry name" value="FtsK_SpoIIIE"/>
    <property type="match status" value="2"/>
</dbReference>
<dbReference type="SMART" id="SM00382">
    <property type="entry name" value="AAA"/>
    <property type="match status" value="3"/>
</dbReference>
<dbReference type="SUPFAM" id="SSF52540">
    <property type="entry name" value="P-loop containing nucleoside triphosphate hydrolases"/>
    <property type="match status" value="3"/>
</dbReference>
<dbReference type="PROSITE" id="PS50901">
    <property type="entry name" value="FTSK"/>
    <property type="match status" value="2"/>
</dbReference>
<comment type="function">
    <text evidence="2">Part of the ESX-3 specialized secretion system, which is important for iron and zinc uptake or homeostasis.</text>
</comment>
<comment type="subunit">
    <text evidence="1">Part of the ESX-3 / type VII secretion system (T7SS), which is composed of cytosolic and membrane components. The ESX-3 membrane complex is composed of EccB3, EccC3, EccD3 and EccE3.</text>
</comment>
<comment type="subcellular location">
    <subcellularLocation>
        <location evidence="1">Cell inner membrane</location>
        <topology evidence="3">Multi-pass membrane protein</topology>
    </subcellularLocation>
</comment>
<accession>P9WNA8</accession>
<accession>L0T4X3</accession>
<accession>O53689</accession>
<accession>Q7DA37</accession>
<protein>
    <recommendedName>
        <fullName evidence="2">ESX-3 secretion system protein EccC3</fullName>
    </recommendedName>
    <alternativeName>
        <fullName evidence="2">ESX conserved component C3</fullName>
    </alternativeName>
    <alternativeName>
        <fullName evidence="2">Type VII secretion system protein EccC3</fullName>
        <shortName evidence="2">T7SS protein EccC3</shortName>
    </alternativeName>
</protein>
<sequence length="1330" mass="145229">MSRLIFEARRRLAPPSSHQGTIIIEAPPELPRVIPPSLLRRALPYLIGILIVGMIVALVATGMRVISPQTLFFPFVLLLAATALYRGNDKKMRTEEVDAERADYLRYLSVVRDNIRAQAAEQRASALWSHPDPTALASVPGSRRQWERDPHDPDFLVLRAGRHTVPLATTLRVNDTADEIDLEPVSHSALRSLLDTQRSIGDVPTGIDLTKVSRITVLGERAQVRAVLRAWIAQAVTWHDPTVLGVALAARDLEGRDWNWLKWLPHVDIPGRLDALGPARNLSTDPDELIALLGPVLADRPAFTGQPTDALRHLLIVVDDPDYDLGASPLAVGRAGVTVVHCSASAPHREQYSDPEKPILRVAHGAIERWQTGGWQPYIDAADQFSADEAAHLARRLSRWDSNPTHAGLRSAATRGASFTTLLGIEDASRLDVPALWAPRRRDEELRVPIGVTGTGEPLMFDLKDEAEGGMGPHGLMIGMTGSGKSQTLMSILLSLLTTHSAERLIVIYADFKGEAGADSFRDFPQVVAVISNMAEKKSLADRFADTLRGEVARREMLLREAGRKVQGSAFNSVLEYENAIAAGHSLPPIPTLFVVADEFTLMLADHPEYAELFDYVARKGRSFRIHILFASQTLDVGKIKDIDKNTAYRIGLKVASPSVSRQIIGVEDAYHIESGKEHKGVGFLVPAPGATPIRFRSTYVDGIYEPPQTAKAVVVQSVPEPKLFTAAAVEPDPGTVIADTDEQEPADPPRKLIATIGEQLARYGPRAPQLWLPPLDETIPLSAALARAGVGPRQWRWPLGEIDRPFEMRRDPLVFDARSSAGNMVIHGGPKSGKSTALQTFILSAASLHSPHEVSFYCLDYGGGQLRALQDLAHVGSVASALEPERIRRTFGELEQLLLSRQQREVFRDRGANGSTPDDGFGEVFLVIDNLYGFGRDNTDQFNTRNPLLARVTELVNVGLAYGIHVIITTPSWLEVPLAMRDGLGLRLELRLHDARDSNVRVVGALRRPADAVPHDQPGRGLTMAAEHFLFAAPELDAQTNPVAAINARYPGMAAPPVRLLPTNLAPHAVGELYRGPDQLVIGQREEDLAPVILDLAANPLLMVFGDARSGKTTLLRHIIRTVREHSTADRVAFTVLDRRLHLVDEPLFPDNEYTANIDRIIPAMLGLANLIEARRPPAGMSAAELSRWTFAGHTHYLIIDDVDQVPDSPAMTGPYIGQRPWTPLIGLLAQAGDLGLRVIVTGRATGSAHLLMTSPLLRRFNDLQATTLMLAGNPADSGKIRGERFARLPAGRAILLTDSDSPTYVQLINPLVDAAAVSGETQQKGSQS</sequence>
<keyword id="KW-0067">ATP-binding</keyword>
<keyword id="KW-0997">Cell inner membrane</keyword>
<keyword id="KW-1003">Cell membrane</keyword>
<keyword id="KW-0472">Membrane</keyword>
<keyword id="KW-0547">Nucleotide-binding</keyword>
<keyword id="KW-1185">Reference proteome</keyword>
<keyword id="KW-0677">Repeat</keyword>
<keyword id="KW-0812">Transmembrane</keyword>
<keyword id="KW-1133">Transmembrane helix</keyword>
<keyword id="KW-0813">Transport</keyword>
<feature type="chain" id="PRO_0000427159" description="ESX-3 secretion system protein EccC3">
    <location>
        <begin position="1"/>
        <end position="1330"/>
    </location>
</feature>
<feature type="transmembrane region" description="Helical" evidence="3">
    <location>
        <begin position="43"/>
        <end position="63"/>
    </location>
</feature>
<feature type="transmembrane region" description="Helical" evidence="3">
    <location>
        <begin position="65"/>
        <end position="85"/>
    </location>
</feature>
<feature type="domain" description="FtsK 1" evidence="4">
    <location>
        <begin position="456"/>
        <end position="662"/>
    </location>
</feature>
<feature type="domain" description="FtsK 2" evidence="4">
    <location>
        <begin position="811"/>
        <end position="1000"/>
    </location>
</feature>
<feature type="domain" description="FtsK 3" evidence="4">
    <location>
        <begin position="1090"/>
        <end position="1280"/>
    </location>
</feature>
<feature type="binding site" evidence="4">
    <location>
        <begin position="479"/>
        <end position="486"/>
    </location>
    <ligand>
        <name>ATP</name>
        <dbReference type="ChEBI" id="CHEBI:30616"/>
    </ligand>
</feature>
<feature type="binding site" evidence="4">
    <location>
        <begin position="829"/>
        <end position="836"/>
    </location>
    <ligand>
        <name>ATP</name>
        <dbReference type="ChEBI" id="CHEBI:30616"/>
    </ligand>
</feature>
<feature type="binding site" evidence="4">
    <location>
        <begin position="1107"/>
        <end position="1114"/>
    </location>
    <ligand>
        <name>ATP</name>
        <dbReference type="ChEBI" id="CHEBI:30616"/>
    </ligand>
</feature>